<comment type="function">
    <text evidence="2">Component of the ubiquinol-cytochrome c reductase complex (complex III or cytochrome b-c1 complex) that is part of the mitochondrial respiratory chain. The b-c1 complex mediates electron transfer from ubiquinol to cytochrome c. Contributes to the generation of a proton gradient across the mitochondrial membrane that is then used for ATP synthesis.</text>
</comment>
<comment type="cofactor">
    <cofactor evidence="2">
        <name>heme b</name>
        <dbReference type="ChEBI" id="CHEBI:60344"/>
    </cofactor>
    <text evidence="2">Binds 2 heme b groups non-covalently.</text>
</comment>
<comment type="subunit">
    <text evidence="2">The cytochrome bc1 complex contains 11 subunits: 3 respiratory subunits (MT-CYB, CYC1 and UQCRFS1), 2 core proteins (UQCRC1 and UQCRC2) and 6 low-molecular weight proteins (UQCRH/QCR6, UQCRB/QCR7, UQCRQ/QCR8, UQCR10/QCR9, UQCR11/QCR10 and a cleavage product of UQCRFS1). This cytochrome bc1 complex then forms a dimer.</text>
</comment>
<comment type="subcellular location">
    <subcellularLocation>
        <location evidence="2">Mitochondrion inner membrane</location>
        <topology evidence="2">Multi-pass membrane protein</topology>
    </subcellularLocation>
</comment>
<comment type="miscellaneous">
    <text evidence="1">Heme 1 (or BL or b562) is low-potential and absorbs at about 562 nm, and heme 2 (or BH or b566) is high-potential and absorbs at about 566 nm.</text>
</comment>
<comment type="similarity">
    <text evidence="3">Belongs to the cytochrome b family.</text>
</comment>
<comment type="caution">
    <text evidence="2">The full-length protein contains only eight transmembrane helices, not nine as predicted by bioinformatics tools.</text>
</comment>
<evidence type="ECO:0000250" key="1"/>
<evidence type="ECO:0000250" key="2">
    <source>
        <dbReference type="UniProtKB" id="P00157"/>
    </source>
</evidence>
<evidence type="ECO:0000255" key="3">
    <source>
        <dbReference type="PROSITE-ProRule" id="PRU00968"/>
    </source>
</evidence>
<feature type="chain" id="PRO_0000061061" description="Cytochrome b">
    <location>
        <begin position="1"/>
        <end position="176" status="greater than"/>
    </location>
</feature>
<feature type="transmembrane region" description="Helical" evidence="2">
    <location>
        <begin position="33"/>
        <end position="53"/>
    </location>
</feature>
<feature type="transmembrane region" description="Helical" evidence="2">
    <location>
        <begin position="77"/>
        <end position="98"/>
    </location>
</feature>
<feature type="transmembrane region" description="Helical" evidence="2">
    <location>
        <begin position="113"/>
        <end position="133"/>
    </location>
</feature>
<feature type="binding site" description="axial binding residue" evidence="2">
    <location>
        <position position="83"/>
    </location>
    <ligand>
        <name>heme b</name>
        <dbReference type="ChEBI" id="CHEBI:60344"/>
        <label>b562</label>
    </ligand>
    <ligandPart>
        <name>Fe</name>
        <dbReference type="ChEBI" id="CHEBI:18248"/>
    </ligandPart>
</feature>
<feature type="binding site" description="axial binding residue" evidence="2">
    <location>
        <position position="97"/>
    </location>
    <ligand>
        <name>heme b</name>
        <dbReference type="ChEBI" id="CHEBI:60344"/>
        <label>b566</label>
    </ligand>
    <ligandPart>
        <name>Fe</name>
        <dbReference type="ChEBI" id="CHEBI:18248"/>
    </ligandPart>
</feature>
<feature type="non-terminal residue">
    <location>
        <position position="176"/>
    </location>
</feature>
<keyword id="KW-0249">Electron transport</keyword>
<keyword id="KW-0349">Heme</keyword>
<keyword id="KW-0408">Iron</keyword>
<keyword id="KW-0472">Membrane</keyword>
<keyword id="KW-0479">Metal-binding</keyword>
<keyword id="KW-0496">Mitochondrion</keyword>
<keyword id="KW-0999">Mitochondrion inner membrane</keyword>
<keyword id="KW-0679">Respiratory chain</keyword>
<keyword id="KW-0812">Transmembrane</keyword>
<keyword id="KW-1133">Transmembrane helix</keyword>
<keyword id="KW-0813">Transport</keyword>
<keyword id="KW-0830">Ubiquinone</keyword>
<dbReference type="EMBL" id="L19722">
    <property type="protein sequence ID" value="AAA17768.1"/>
    <property type="molecule type" value="Genomic_DNA"/>
</dbReference>
<dbReference type="SMR" id="Q33537"/>
<dbReference type="GO" id="GO:0005743">
    <property type="term" value="C:mitochondrial inner membrane"/>
    <property type="evidence" value="ECO:0007669"/>
    <property type="project" value="UniProtKB-SubCell"/>
</dbReference>
<dbReference type="GO" id="GO:0046872">
    <property type="term" value="F:metal ion binding"/>
    <property type="evidence" value="ECO:0007669"/>
    <property type="project" value="UniProtKB-KW"/>
</dbReference>
<dbReference type="GO" id="GO:0008121">
    <property type="term" value="F:ubiquinol-cytochrome-c reductase activity"/>
    <property type="evidence" value="ECO:0007669"/>
    <property type="project" value="TreeGrafter"/>
</dbReference>
<dbReference type="GO" id="GO:0006122">
    <property type="term" value="P:mitochondrial electron transport, ubiquinol to cytochrome c"/>
    <property type="evidence" value="ECO:0007669"/>
    <property type="project" value="TreeGrafter"/>
</dbReference>
<dbReference type="CDD" id="cd00284">
    <property type="entry name" value="Cytochrome_b_N"/>
    <property type="match status" value="1"/>
</dbReference>
<dbReference type="Gene3D" id="1.20.810.10">
    <property type="entry name" value="Cytochrome Bc1 Complex, Chain C"/>
    <property type="match status" value="1"/>
</dbReference>
<dbReference type="InterPro" id="IPR005797">
    <property type="entry name" value="Cyt_b/b6_N"/>
</dbReference>
<dbReference type="InterPro" id="IPR027387">
    <property type="entry name" value="Cytb/b6-like_sf"/>
</dbReference>
<dbReference type="InterPro" id="IPR048259">
    <property type="entry name" value="Cytochrome_b_N_euk/bac"/>
</dbReference>
<dbReference type="InterPro" id="IPR016174">
    <property type="entry name" value="Di-haem_cyt_TM"/>
</dbReference>
<dbReference type="PANTHER" id="PTHR19271">
    <property type="entry name" value="CYTOCHROME B"/>
    <property type="match status" value="1"/>
</dbReference>
<dbReference type="PANTHER" id="PTHR19271:SF16">
    <property type="entry name" value="CYTOCHROME B"/>
    <property type="match status" value="1"/>
</dbReference>
<dbReference type="Pfam" id="PF00033">
    <property type="entry name" value="Cytochrome_B"/>
    <property type="match status" value="1"/>
</dbReference>
<dbReference type="SUPFAM" id="SSF81342">
    <property type="entry name" value="Transmembrane di-heme cytochromes"/>
    <property type="match status" value="1"/>
</dbReference>
<dbReference type="PROSITE" id="PS51002">
    <property type="entry name" value="CYTB_NTER"/>
    <property type="match status" value="1"/>
</dbReference>
<accession>Q33537</accession>
<reference key="1">
    <citation type="journal article" date="1994" name="J. Mammal.">
        <title>Familial affinity of Tomopeas ravus (Chiroptera) based on protein electrophoretic and cytochrome b sequence data.</title>
        <authorList>
            <person name="Sudman P.D."/>
            <person name="Barkley L.J."/>
            <person name="Hafner M.S."/>
        </authorList>
    </citation>
    <scope>NUCLEOTIDE SEQUENCE [GENOMIC DNA]</scope>
    <source>
        <strain>Isolate LSUMZ 22032</strain>
        <tissue>Kidney</tissue>
        <tissue>Liver</tissue>
    </source>
</reference>
<name>CYB_IDIPH</name>
<proteinExistence type="inferred from homology"/>
<gene>
    <name type="primary">MT-CYB</name>
    <name type="synonym">COB</name>
    <name type="synonym">CYTB</name>
    <name type="synonym">MTCYB</name>
</gene>
<geneLocation type="mitochondrion"/>
<organism>
    <name type="scientific">Idionycteris phyllotis</name>
    <name type="common">Allen's big-eared bat</name>
    <name type="synonym">Corynorhinus phyllotis</name>
    <dbReference type="NCBI Taxonomy" id="27665"/>
    <lineage>
        <taxon>Eukaryota</taxon>
        <taxon>Metazoa</taxon>
        <taxon>Chordata</taxon>
        <taxon>Craniata</taxon>
        <taxon>Vertebrata</taxon>
        <taxon>Euteleostomi</taxon>
        <taxon>Mammalia</taxon>
        <taxon>Eutheria</taxon>
        <taxon>Laurasiatheria</taxon>
        <taxon>Chiroptera</taxon>
        <taxon>Yangochiroptera</taxon>
        <taxon>Vespertilionidae</taxon>
        <taxon>Idionycteris</taxon>
    </lineage>
</organism>
<protein>
    <recommendedName>
        <fullName>Cytochrome b</fullName>
    </recommendedName>
    <alternativeName>
        <fullName>Complex III subunit 3</fullName>
    </alternativeName>
    <alternativeName>
        <fullName>Complex III subunit III</fullName>
    </alternativeName>
    <alternativeName>
        <fullName>Cytochrome b-c1 complex subunit 3</fullName>
    </alternativeName>
    <alternativeName>
        <fullName>Ubiquinol-cytochrome-c reductase complex cytochrome b subunit</fullName>
    </alternativeName>
</protein>
<sequence>MTNIRKSHPLLKIINKSFVDLPAPSNISSWWNFGSLLGICLMLQIMTGLFLAMHYTADTTTAFNSVTHICRDVNYGWMLRYLHANGASMFFICLYLHVGRGLYYGSYLYKETWNVGVLLLFTVMATAFMGYVLPWGQMSFWGATVITNLLSAIPYIGTTLVEWIWGGFSVDKATLT</sequence>